<organism>
    <name type="scientific">Homo sapiens</name>
    <name type="common">Human</name>
    <dbReference type="NCBI Taxonomy" id="9606"/>
    <lineage>
        <taxon>Eukaryota</taxon>
        <taxon>Metazoa</taxon>
        <taxon>Chordata</taxon>
        <taxon>Craniata</taxon>
        <taxon>Vertebrata</taxon>
        <taxon>Euteleostomi</taxon>
        <taxon>Mammalia</taxon>
        <taxon>Eutheria</taxon>
        <taxon>Euarchontoglires</taxon>
        <taxon>Primates</taxon>
        <taxon>Haplorrhini</taxon>
        <taxon>Catarrhini</taxon>
        <taxon>Hominidae</taxon>
        <taxon>Homo</taxon>
    </lineage>
</organism>
<dbReference type="EMBL" id="AF094516">
    <property type="protein sequence ID" value="AAC69630.1"/>
    <property type="molecule type" value="mRNA"/>
</dbReference>
<dbReference type="EMBL" id="AK303694">
    <property type="protein sequence ID" value="BAG64682.1"/>
    <property type="molecule type" value="mRNA"/>
</dbReference>
<dbReference type="EMBL" id="AC020750">
    <property type="status" value="NOT_ANNOTATED_CDS"/>
    <property type="molecule type" value="Genomic_DNA"/>
</dbReference>
<dbReference type="EMBL" id="AC022001">
    <property type="status" value="NOT_ANNOTATED_CDS"/>
    <property type="molecule type" value="Genomic_DNA"/>
</dbReference>
<dbReference type="EMBL" id="AC026185">
    <property type="status" value="NOT_ANNOTATED_CDS"/>
    <property type="molecule type" value="Genomic_DNA"/>
</dbReference>
<dbReference type="EMBL" id="AC083855">
    <property type="status" value="NOT_ANNOTATED_CDS"/>
    <property type="molecule type" value="Genomic_DNA"/>
</dbReference>
<dbReference type="EMBL" id="BC000091">
    <property type="protein sequence ID" value="AAH00091.1"/>
    <property type="molecule type" value="mRNA"/>
</dbReference>
<dbReference type="EMBL" id="AL122075">
    <property type="protein sequence ID" value="CAB59250.1"/>
    <property type="molecule type" value="mRNA"/>
</dbReference>
<dbReference type="CCDS" id="CCDS2605.1">
    <molecule id="O95352-1"/>
</dbReference>
<dbReference type="CCDS" id="CCDS46752.1">
    <molecule id="O95352-2"/>
</dbReference>
<dbReference type="CCDS" id="CCDS46753.1">
    <molecule id="O95352-3"/>
</dbReference>
<dbReference type="PIR" id="T34556">
    <property type="entry name" value="T34556"/>
</dbReference>
<dbReference type="RefSeq" id="NP_001129503.2">
    <molecule id="O95352-2"/>
    <property type="nucleotide sequence ID" value="NM_001136031.3"/>
</dbReference>
<dbReference type="RefSeq" id="NP_001138384.1">
    <molecule id="O95352-3"/>
    <property type="nucleotide sequence ID" value="NM_001144912.2"/>
</dbReference>
<dbReference type="RefSeq" id="NP_001336161.1">
    <molecule id="O95352-1"/>
    <property type="nucleotide sequence ID" value="NM_001349232.2"/>
</dbReference>
<dbReference type="RefSeq" id="NP_001336162.1">
    <molecule id="O95352-1"/>
    <property type="nucleotide sequence ID" value="NM_001349233.2"/>
</dbReference>
<dbReference type="RefSeq" id="NP_001336163.1">
    <molecule id="O95352-1"/>
    <property type="nucleotide sequence ID" value="NM_001349234.2"/>
</dbReference>
<dbReference type="RefSeq" id="NP_001336164.1">
    <molecule id="O95352-1"/>
    <property type="nucleotide sequence ID" value="NM_001349235.2"/>
</dbReference>
<dbReference type="RefSeq" id="NP_006386.1">
    <molecule id="O95352-1"/>
    <property type="nucleotide sequence ID" value="NM_006395.3"/>
</dbReference>
<dbReference type="RefSeq" id="XP_011531584.1">
    <property type="nucleotide sequence ID" value="XM_011533282.2"/>
</dbReference>
<dbReference type="RefSeq" id="XP_011531588.1">
    <property type="nucleotide sequence ID" value="XM_011533286.2"/>
</dbReference>
<dbReference type="RefSeq" id="XP_016861033.1">
    <property type="nucleotide sequence ID" value="XM_017005544.1"/>
</dbReference>
<dbReference type="RefSeq" id="XP_016861034.1">
    <property type="nucleotide sequence ID" value="XM_017005545.1"/>
</dbReference>
<dbReference type="RefSeq" id="XP_016861035.1">
    <property type="nucleotide sequence ID" value="XM_017005546.1"/>
</dbReference>
<dbReference type="SMR" id="O95352"/>
<dbReference type="BioGRID" id="115787">
    <property type="interactions" value="421"/>
</dbReference>
<dbReference type="DIP" id="DIP-29759N"/>
<dbReference type="FunCoup" id="O95352">
    <property type="interactions" value="1882"/>
</dbReference>
<dbReference type="IntAct" id="O95352">
    <property type="interactions" value="138"/>
</dbReference>
<dbReference type="STRING" id="9606.ENSP00000346437"/>
<dbReference type="BindingDB" id="O95352"/>
<dbReference type="ChEMBL" id="CHEMBL2321621"/>
<dbReference type="TCDB" id="9.A.15.2.1">
    <property type="family name" value="the autophagy-related phagophore-formation transporter (apt) family"/>
</dbReference>
<dbReference type="GlyGen" id="O95352">
    <property type="glycosylation" value="1 site"/>
</dbReference>
<dbReference type="iPTMnet" id="O95352"/>
<dbReference type="MetOSite" id="O95352"/>
<dbReference type="PhosphoSitePlus" id="O95352"/>
<dbReference type="SwissPalm" id="O95352"/>
<dbReference type="BioMuta" id="ATG7"/>
<dbReference type="jPOST" id="O95352"/>
<dbReference type="MassIVE" id="O95352"/>
<dbReference type="PaxDb" id="9606-ENSP00000346437"/>
<dbReference type="PeptideAtlas" id="O95352"/>
<dbReference type="ProteomicsDB" id="19175"/>
<dbReference type="ProteomicsDB" id="50814">
    <molecule id="O95352-1"/>
</dbReference>
<dbReference type="ProteomicsDB" id="50815">
    <molecule id="O95352-2"/>
</dbReference>
<dbReference type="Pumba" id="O95352"/>
<dbReference type="Antibodypedia" id="1972">
    <property type="antibodies" value="818 antibodies from 46 providers"/>
</dbReference>
<dbReference type="DNASU" id="10533"/>
<dbReference type="Ensembl" id="ENST00000354449.7">
    <molecule id="O95352-1"/>
    <property type="protein sequence ID" value="ENSP00000346437.3"/>
    <property type="gene ID" value="ENSG00000197548.13"/>
</dbReference>
<dbReference type="Ensembl" id="ENST00000354956.9">
    <molecule id="O95352-2"/>
    <property type="protein sequence ID" value="ENSP00000347042.5"/>
    <property type="gene ID" value="ENSG00000197548.13"/>
</dbReference>
<dbReference type="Ensembl" id="ENST00000446450.6">
    <molecule id="O95352-3"/>
    <property type="protein sequence ID" value="ENSP00000412580.2"/>
    <property type="gene ID" value="ENSG00000197548.13"/>
</dbReference>
<dbReference type="Ensembl" id="ENST00000685771.1">
    <molecule id="O95352-1"/>
    <property type="protein sequence ID" value="ENSP00000509725.1"/>
    <property type="gene ID" value="ENSG00000197548.13"/>
</dbReference>
<dbReference type="Ensembl" id="ENST00000693202.1">
    <molecule id="O95352-1"/>
    <property type="protein sequence ID" value="ENSP00000510336.1"/>
    <property type="gene ID" value="ENSG00000197548.13"/>
</dbReference>
<dbReference type="GeneID" id="10533"/>
<dbReference type="KEGG" id="hsa:10533"/>
<dbReference type="MANE-Select" id="ENST00000693202.1">
    <property type="protein sequence ID" value="ENSP00000510336.1"/>
    <property type="RefSeq nucleotide sequence ID" value="NM_001349232.2"/>
    <property type="RefSeq protein sequence ID" value="NP_001336161.1"/>
</dbReference>
<dbReference type="UCSC" id="uc003bwc.4">
    <molecule id="O95352-1"/>
    <property type="organism name" value="human"/>
</dbReference>
<dbReference type="AGR" id="HGNC:16935"/>
<dbReference type="CTD" id="10533"/>
<dbReference type="DisGeNET" id="10533"/>
<dbReference type="GeneCards" id="ATG7"/>
<dbReference type="HGNC" id="HGNC:16935">
    <property type="gene designation" value="ATG7"/>
</dbReference>
<dbReference type="HPA" id="ENSG00000197548">
    <property type="expression patterns" value="Low tissue specificity"/>
</dbReference>
<dbReference type="MalaCards" id="ATG7"/>
<dbReference type="MIM" id="608760">
    <property type="type" value="gene"/>
</dbReference>
<dbReference type="MIM" id="619422">
    <property type="type" value="phenotype"/>
</dbReference>
<dbReference type="neXtProt" id="NX_O95352"/>
<dbReference type="OpenTargets" id="ENSG00000197548"/>
<dbReference type="PharmGKB" id="PA134983397"/>
<dbReference type="VEuPathDB" id="HostDB:ENSG00000197548"/>
<dbReference type="eggNOG" id="KOG2337">
    <property type="taxonomic scope" value="Eukaryota"/>
</dbReference>
<dbReference type="GeneTree" id="ENSGT00390000017509"/>
<dbReference type="HOGENOM" id="CLU_012998_1_0_1"/>
<dbReference type="InParanoid" id="O95352"/>
<dbReference type="OMA" id="RQIWDAI"/>
<dbReference type="OrthoDB" id="338614at2759"/>
<dbReference type="PAN-GO" id="O95352">
    <property type="GO annotations" value="11 GO annotations based on evolutionary models"/>
</dbReference>
<dbReference type="PhylomeDB" id="O95352"/>
<dbReference type="TreeFam" id="TF105689"/>
<dbReference type="PathwayCommons" id="O95352"/>
<dbReference type="Reactome" id="R-HSA-1632852">
    <property type="pathway name" value="Macroautophagy"/>
</dbReference>
<dbReference type="Reactome" id="R-HSA-6798695">
    <property type="pathway name" value="Neutrophil degranulation"/>
</dbReference>
<dbReference type="Reactome" id="R-HSA-6802952">
    <property type="pathway name" value="Signaling by BRAF and RAF1 fusions"/>
</dbReference>
<dbReference type="Reactome" id="R-HSA-983168">
    <property type="pathway name" value="Antigen processing: Ubiquitination &amp; Proteasome degradation"/>
</dbReference>
<dbReference type="SignaLink" id="O95352"/>
<dbReference type="SIGNOR" id="O95352"/>
<dbReference type="BioGRID-ORCS" id="10533">
    <property type="hits" value="31 hits in 1171 CRISPR screens"/>
</dbReference>
<dbReference type="ChiTaRS" id="ATG7">
    <property type="organism name" value="human"/>
</dbReference>
<dbReference type="GeneWiki" id="ATG7"/>
<dbReference type="GenomeRNAi" id="10533"/>
<dbReference type="Pharos" id="O95352">
    <property type="development level" value="Tchem"/>
</dbReference>
<dbReference type="PRO" id="PR:O95352"/>
<dbReference type="Proteomes" id="UP000005640">
    <property type="component" value="Chromosome 3"/>
</dbReference>
<dbReference type="RNAct" id="O95352">
    <property type="molecule type" value="protein"/>
</dbReference>
<dbReference type="Bgee" id="ENSG00000197548">
    <property type="expression patterns" value="Expressed in monocyte and 152 other cell types or tissues"/>
</dbReference>
<dbReference type="ExpressionAtlas" id="O95352">
    <property type="expression patterns" value="baseline and differential"/>
</dbReference>
<dbReference type="GO" id="GO:0005930">
    <property type="term" value="C:axoneme"/>
    <property type="evidence" value="ECO:0000250"/>
    <property type="project" value="UniProtKB"/>
</dbReference>
<dbReference type="GO" id="GO:0005737">
    <property type="term" value="C:cytoplasm"/>
    <property type="evidence" value="ECO:0000314"/>
    <property type="project" value="UniProtKB"/>
</dbReference>
<dbReference type="GO" id="GO:0005829">
    <property type="term" value="C:cytosol"/>
    <property type="evidence" value="ECO:0000304"/>
    <property type="project" value="Reactome"/>
</dbReference>
<dbReference type="GO" id="GO:0005576">
    <property type="term" value="C:extracellular region"/>
    <property type="evidence" value="ECO:0000304"/>
    <property type="project" value="Reactome"/>
</dbReference>
<dbReference type="GO" id="GO:1904813">
    <property type="term" value="C:ficolin-1-rich granule lumen"/>
    <property type="evidence" value="ECO:0000304"/>
    <property type="project" value="Reactome"/>
</dbReference>
<dbReference type="GO" id="GO:0000407">
    <property type="term" value="C:phagophore assembly site"/>
    <property type="evidence" value="ECO:0000314"/>
    <property type="project" value="UniProt"/>
</dbReference>
<dbReference type="GO" id="GO:0034774">
    <property type="term" value="C:secretory granule lumen"/>
    <property type="evidence" value="ECO:0000304"/>
    <property type="project" value="Reactome"/>
</dbReference>
<dbReference type="GO" id="GO:0019778">
    <property type="term" value="F:Atg12 activating enzyme activity"/>
    <property type="evidence" value="ECO:0000314"/>
    <property type="project" value="UniProt"/>
</dbReference>
<dbReference type="GO" id="GO:0019779">
    <property type="term" value="F:Atg8 activating enzyme activity"/>
    <property type="evidence" value="ECO:0000318"/>
    <property type="project" value="GO_Central"/>
</dbReference>
<dbReference type="GO" id="GO:0042803">
    <property type="term" value="F:protein homodimerization activity"/>
    <property type="evidence" value="ECO:0000314"/>
    <property type="project" value="UniProtKB"/>
</dbReference>
<dbReference type="GO" id="GO:0000045">
    <property type="term" value="P:autophagosome assembly"/>
    <property type="evidence" value="ECO:0000315"/>
    <property type="project" value="UniProt"/>
</dbReference>
<dbReference type="GO" id="GO:0006914">
    <property type="term" value="P:autophagy"/>
    <property type="evidence" value="ECO:0000315"/>
    <property type="project" value="GO_Central"/>
</dbReference>
<dbReference type="GO" id="GO:0071455">
    <property type="term" value="P:cellular response to hyperoxia"/>
    <property type="evidence" value="ECO:0000314"/>
    <property type="project" value="UniProtKB"/>
</dbReference>
<dbReference type="GO" id="GO:0006995">
    <property type="term" value="P:cellular response to nitrogen starvation"/>
    <property type="evidence" value="ECO:0000318"/>
    <property type="project" value="GO_Central"/>
</dbReference>
<dbReference type="GO" id="GO:0009267">
    <property type="term" value="P:cellular response to starvation"/>
    <property type="evidence" value="ECO:0000314"/>
    <property type="project" value="UniProtKB"/>
</dbReference>
<dbReference type="GO" id="GO:0033554">
    <property type="term" value="P:cellular response to stress"/>
    <property type="evidence" value="ECO:0000314"/>
    <property type="project" value="UniProt"/>
</dbReference>
<dbReference type="GO" id="GO:0051607">
    <property type="term" value="P:defense response to virus"/>
    <property type="evidence" value="ECO:0000315"/>
    <property type="project" value="CACAO"/>
</dbReference>
<dbReference type="GO" id="GO:0016236">
    <property type="term" value="P:macroautophagy"/>
    <property type="evidence" value="ECO:0000315"/>
    <property type="project" value="BHF-UCL"/>
</dbReference>
<dbReference type="GO" id="GO:0000423">
    <property type="term" value="P:mitophagy"/>
    <property type="evidence" value="ECO:0000316"/>
    <property type="project" value="ParkinsonsUK-UCL"/>
</dbReference>
<dbReference type="GO" id="GO:0034727">
    <property type="term" value="P:piecemeal microautophagy of the nucleus"/>
    <property type="evidence" value="ECO:0000318"/>
    <property type="project" value="GO_Central"/>
</dbReference>
<dbReference type="GO" id="GO:0043065">
    <property type="term" value="P:positive regulation of apoptotic process"/>
    <property type="evidence" value="ECO:0000315"/>
    <property type="project" value="UniProtKB"/>
</dbReference>
<dbReference type="GO" id="GO:0045732">
    <property type="term" value="P:positive regulation of protein catabolic process"/>
    <property type="evidence" value="ECO:0000315"/>
    <property type="project" value="UniProtKB"/>
</dbReference>
<dbReference type="GO" id="GO:0031401">
    <property type="term" value="P:positive regulation of protein modification process"/>
    <property type="evidence" value="ECO:0000314"/>
    <property type="project" value="MGI"/>
</dbReference>
<dbReference type="GO" id="GO:0006497">
    <property type="term" value="P:protein lipidation"/>
    <property type="evidence" value="ECO:0000314"/>
    <property type="project" value="MGI"/>
</dbReference>
<dbReference type="GO" id="GO:0032446">
    <property type="term" value="P:protein modification by small protein conjugation"/>
    <property type="evidence" value="ECO:0000318"/>
    <property type="project" value="GO_Central"/>
</dbReference>
<dbReference type="GO" id="GO:0015031">
    <property type="term" value="P:protein transport"/>
    <property type="evidence" value="ECO:0007669"/>
    <property type="project" value="UniProtKB-KW"/>
</dbReference>
<dbReference type="GO" id="GO:0042752">
    <property type="term" value="P:regulation of circadian rhythm"/>
    <property type="evidence" value="ECO:0000250"/>
    <property type="project" value="UniProtKB"/>
</dbReference>
<dbReference type="GO" id="GO:0048511">
    <property type="term" value="P:rhythmic process"/>
    <property type="evidence" value="ECO:0007669"/>
    <property type="project" value="UniProtKB-KW"/>
</dbReference>
<dbReference type="CDD" id="cd01486">
    <property type="entry name" value="Apg7"/>
    <property type="match status" value="1"/>
</dbReference>
<dbReference type="FunFam" id="3.40.140.100:FF:000001">
    <property type="entry name" value="Ubiquitin-like modifier-activating enzyme ATG7"/>
    <property type="match status" value="1"/>
</dbReference>
<dbReference type="FunFam" id="3.40.50.720:FF:000156">
    <property type="entry name" value="Ubiquitin-like modifier-activating enzyme ATG7"/>
    <property type="match status" value="1"/>
</dbReference>
<dbReference type="FunFam" id="3.40.140.70:FF:000001">
    <property type="entry name" value="Ubiquitin-like modifier-activating enzyme atg7"/>
    <property type="match status" value="1"/>
</dbReference>
<dbReference type="Gene3D" id="3.40.50.720">
    <property type="entry name" value="NAD(P)-binding Rossmann-like Domain"/>
    <property type="match status" value="1"/>
</dbReference>
<dbReference type="Gene3D" id="3.40.140.100">
    <property type="entry name" value="Ubiquitin-like modifier-activating enzyme ATG7 C-terminal domain"/>
    <property type="match status" value="1"/>
</dbReference>
<dbReference type="Gene3D" id="3.40.140.70">
    <property type="entry name" value="Ubiquitin-like modifier-activating enzyme ATG7 N-terminal domain"/>
    <property type="match status" value="1"/>
</dbReference>
<dbReference type="InterPro" id="IPR006285">
    <property type="entry name" value="Atg7"/>
</dbReference>
<dbReference type="InterPro" id="IPR032197">
    <property type="entry name" value="Atg7_N"/>
</dbReference>
<dbReference type="InterPro" id="IPR042522">
    <property type="entry name" value="Atg7_N_1"/>
</dbReference>
<dbReference type="InterPro" id="IPR042523">
    <property type="entry name" value="Atg7_N_2"/>
</dbReference>
<dbReference type="InterPro" id="IPR045886">
    <property type="entry name" value="ThiF/MoeB/HesA"/>
</dbReference>
<dbReference type="InterPro" id="IPR000594">
    <property type="entry name" value="ThiF_NAD_FAD-bd"/>
</dbReference>
<dbReference type="InterPro" id="IPR035985">
    <property type="entry name" value="Ubiquitin-activating_enz"/>
</dbReference>
<dbReference type="NCBIfam" id="TIGR01381">
    <property type="entry name" value="E1_like_apg7"/>
    <property type="match status" value="1"/>
</dbReference>
<dbReference type="PANTHER" id="PTHR10953">
    <property type="entry name" value="UBIQUITIN-ACTIVATING ENZYME E1"/>
    <property type="match status" value="1"/>
</dbReference>
<dbReference type="PANTHER" id="PTHR10953:SF3">
    <property type="entry name" value="UBIQUITIN-LIKE MODIFIER-ACTIVATING ENZYME ATG7"/>
    <property type="match status" value="1"/>
</dbReference>
<dbReference type="Pfam" id="PF16420">
    <property type="entry name" value="ATG7_N"/>
    <property type="match status" value="1"/>
</dbReference>
<dbReference type="Pfam" id="PF00899">
    <property type="entry name" value="ThiF"/>
    <property type="match status" value="1"/>
</dbReference>
<dbReference type="SUPFAM" id="SSF69572">
    <property type="entry name" value="Activating enzymes of the ubiquitin-like proteins"/>
    <property type="match status" value="1"/>
</dbReference>
<gene>
    <name evidence="17" type="primary">ATG7</name>
    <name type="synonym">APG7L</name>
</gene>
<reference key="1">
    <citation type="journal article" date="1999" name="Mol. Biol. Cell">
        <title>Glucose-induced autophagy of peroxisomes in Pichia pastoris requires a unique E1-like protein.</title>
        <authorList>
            <person name="Yuan W."/>
            <person name="Stromhaug P.E."/>
            <person name="Dunn W.A. Jr."/>
        </authorList>
    </citation>
    <scope>NUCLEOTIDE SEQUENCE [MRNA] (ISOFORM 1)</scope>
    <source>
        <tissue>Brain</tissue>
    </source>
</reference>
<reference key="2">
    <citation type="journal article" date="2004" name="Nat. Genet.">
        <title>Complete sequencing and characterization of 21,243 full-length human cDNAs.</title>
        <authorList>
            <person name="Ota T."/>
            <person name="Suzuki Y."/>
            <person name="Nishikawa T."/>
            <person name="Otsuki T."/>
            <person name="Sugiyama T."/>
            <person name="Irie R."/>
            <person name="Wakamatsu A."/>
            <person name="Hayashi K."/>
            <person name="Sato H."/>
            <person name="Nagai K."/>
            <person name="Kimura K."/>
            <person name="Makita H."/>
            <person name="Sekine M."/>
            <person name="Obayashi M."/>
            <person name="Nishi T."/>
            <person name="Shibahara T."/>
            <person name="Tanaka T."/>
            <person name="Ishii S."/>
            <person name="Yamamoto J."/>
            <person name="Saito K."/>
            <person name="Kawai Y."/>
            <person name="Isono Y."/>
            <person name="Nakamura Y."/>
            <person name="Nagahari K."/>
            <person name="Murakami K."/>
            <person name="Yasuda T."/>
            <person name="Iwayanagi T."/>
            <person name="Wagatsuma M."/>
            <person name="Shiratori A."/>
            <person name="Sudo H."/>
            <person name="Hosoiri T."/>
            <person name="Kaku Y."/>
            <person name="Kodaira H."/>
            <person name="Kondo H."/>
            <person name="Sugawara M."/>
            <person name="Takahashi M."/>
            <person name="Kanda K."/>
            <person name="Yokoi T."/>
            <person name="Furuya T."/>
            <person name="Kikkawa E."/>
            <person name="Omura Y."/>
            <person name="Abe K."/>
            <person name="Kamihara K."/>
            <person name="Katsuta N."/>
            <person name="Sato K."/>
            <person name="Tanikawa M."/>
            <person name="Yamazaki M."/>
            <person name="Ninomiya K."/>
            <person name="Ishibashi T."/>
            <person name="Yamashita H."/>
            <person name="Murakawa K."/>
            <person name="Fujimori K."/>
            <person name="Tanai H."/>
            <person name="Kimata M."/>
            <person name="Watanabe M."/>
            <person name="Hiraoka S."/>
            <person name="Chiba Y."/>
            <person name="Ishida S."/>
            <person name="Ono Y."/>
            <person name="Takiguchi S."/>
            <person name="Watanabe S."/>
            <person name="Yosida M."/>
            <person name="Hotuta T."/>
            <person name="Kusano J."/>
            <person name="Kanehori K."/>
            <person name="Takahashi-Fujii A."/>
            <person name="Hara H."/>
            <person name="Tanase T.-O."/>
            <person name="Nomura Y."/>
            <person name="Togiya S."/>
            <person name="Komai F."/>
            <person name="Hara R."/>
            <person name="Takeuchi K."/>
            <person name="Arita M."/>
            <person name="Imose N."/>
            <person name="Musashino K."/>
            <person name="Yuuki H."/>
            <person name="Oshima A."/>
            <person name="Sasaki N."/>
            <person name="Aotsuka S."/>
            <person name="Yoshikawa Y."/>
            <person name="Matsunawa H."/>
            <person name="Ichihara T."/>
            <person name="Shiohata N."/>
            <person name="Sano S."/>
            <person name="Moriya S."/>
            <person name="Momiyama H."/>
            <person name="Satoh N."/>
            <person name="Takami S."/>
            <person name="Terashima Y."/>
            <person name="Suzuki O."/>
            <person name="Nakagawa S."/>
            <person name="Senoh A."/>
            <person name="Mizoguchi H."/>
            <person name="Goto Y."/>
            <person name="Shimizu F."/>
            <person name="Wakebe H."/>
            <person name="Hishigaki H."/>
            <person name="Watanabe T."/>
            <person name="Sugiyama A."/>
            <person name="Takemoto M."/>
            <person name="Kawakami B."/>
            <person name="Yamazaki M."/>
            <person name="Watanabe K."/>
            <person name="Kumagai A."/>
            <person name="Itakura S."/>
            <person name="Fukuzumi Y."/>
            <person name="Fujimori Y."/>
            <person name="Komiyama M."/>
            <person name="Tashiro H."/>
            <person name="Tanigami A."/>
            <person name="Fujiwara T."/>
            <person name="Ono T."/>
            <person name="Yamada K."/>
            <person name="Fujii Y."/>
            <person name="Ozaki K."/>
            <person name="Hirao M."/>
            <person name="Ohmori Y."/>
            <person name="Kawabata A."/>
            <person name="Hikiji T."/>
            <person name="Kobatake N."/>
            <person name="Inagaki H."/>
            <person name="Ikema Y."/>
            <person name="Okamoto S."/>
            <person name="Okitani R."/>
            <person name="Kawakami T."/>
            <person name="Noguchi S."/>
            <person name="Itoh T."/>
            <person name="Shigeta K."/>
            <person name="Senba T."/>
            <person name="Matsumura K."/>
            <person name="Nakajima Y."/>
            <person name="Mizuno T."/>
            <person name="Morinaga M."/>
            <person name="Sasaki M."/>
            <person name="Togashi T."/>
            <person name="Oyama M."/>
            <person name="Hata H."/>
            <person name="Watanabe M."/>
            <person name="Komatsu T."/>
            <person name="Mizushima-Sugano J."/>
            <person name="Satoh T."/>
            <person name="Shirai Y."/>
            <person name="Takahashi Y."/>
            <person name="Nakagawa K."/>
            <person name="Okumura K."/>
            <person name="Nagase T."/>
            <person name="Nomura N."/>
            <person name="Kikuchi H."/>
            <person name="Masuho Y."/>
            <person name="Yamashita R."/>
            <person name="Nakai K."/>
            <person name="Yada T."/>
            <person name="Nakamura Y."/>
            <person name="Ohara O."/>
            <person name="Isogai T."/>
            <person name="Sugano S."/>
        </authorList>
    </citation>
    <scope>NUCLEOTIDE SEQUENCE [LARGE SCALE MRNA] (ISOFORM 3)</scope>
    <source>
        <tissue>Kidney</tissue>
    </source>
</reference>
<reference key="3">
    <citation type="journal article" date="2006" name="Nature">
        <title>The DNA sequence, annotation and analysis of human chromosome 3.</title>
        <authorList>
            <person name="Muzny D.M."/>
            <person name="Scherer S.E."/>
            <person name="Kaul R."/>
            <person name="Wang J."/>
            <person name="Yu J."/>
            <person name="Sudbrak R."/>
            <person name="Buhay C.J."/>
            <person name="Chen R."/>
            <person name="Cree A."/>
            <person name="Ding Y."/>
            <person name="Dugan-Rocha S."/>
            <person name="Gill R."/>
            <person name="Gunaratne P."/>
            <person name="Harris R.A."/>
            <person name="Hawes A.C."/>
            <person name="Hernandez J."/>
            <person name="Hodgson A.V."/>
            <person name="Hume J."/>
            <person name="Jackson A."/>
            <person name="Khan Z.M."/>
            <person name="Kovar-Smith C."/>
            <person name="Lewis L.R."/>
            <person name="Lozado R.J."/>
            <person name="Metzker M.L."/>
            <person name="Milosavljevic A."/>
            <person name="Miner G.R."/>
            <person name="Morgan M.B."/>
            <person name="Nazareth L.V."/>
            <person name="Scott G."/>
            <person name="Sodergren E."/>
            <person name="Song X.-Z."/>
            <person name="Steffen D."/>
            <person name="Wei S."/>
            <person name="Wheeler D.A."/>
            <person name="Wright M.W."/>
            <person name="Worley K.C."/>
            <person name="Yuan Y."/>
            <person name="Zhang Z."/>
            <person name="Adams C.Q."/>
            <person name="Ansari-Lari M.A."/>
            <person name="Ayele M."/>
            <person name="Brown M.J."/>
            <person name="Chen G."/>
            <person name="Chen Z."/>
            <person name="Clendenning J."/>
            <person name="Clerc-Blankenburg K.P."/>
            <person name="Chen R."/>
            <person name="Chen Z."/>
            <person name="Davis C."/>
            <person name="Delgado O."/>
            <person name="Dinh H.H."/>
            <person name="Dong W."/>
            <person name="Draper H."/>
            <person name="Ernst S."/>
            <person name="Fu G."/>
            <person name="Gonzalez-Garay M.L."/>
            <person name="Garcia D.K."/>
            <person name="Gillett W."/>
            <person name="Gu J."/>
            <person name="Hao B."/>
            <person name="Haugen E."/>
            <person name="Havlak P."/>
            <person name="He X."/>
            <person name="Hennig S."/>
            <person name="Hu S."/>
            <person name="Huang W."/>
            <person name="Jackson L.R."/>
            <person name="Jacob L.S."/>
            <person name="Kelly S.H."/>
            <person name="Kube M."/>
            <person name="Levy R."/>
            <person name="Li Z."/>
            <person name="Liu B."/>
            <person name="Liu J."/>
            <person name="Liu W."/>
            <person name="Lu J."/>
            <person name="Maheshwari M."/>
            <person name="Nguyen B.-V."/>
            <person name="Okwuonu G.O."/>
            <person name="Palmeiri A."/>
            <person name="Pasternak S."/>
            <person name="Perez L.M."/>
            <person name="Phelps K.A."/>
            <person name="Plopper F.J."/>
            <person name="Qiang B."/>
            <person name="Raymond C."/>
            <person name="Rodriguez R."/>
            <person name="Saenphimmachak C."/>
            <person name="Santibanez J."/>
            <person name="Shen H."/>
            <person name="Shen Y."/>
            <person name="Subramanian S."/>
            <person name="Tabor P.E."/>
            <person name="Verduzco D."/>
            <person name="Waldron L."/>
            <person name="Wang J."/>
            <person name="Wang J."/>
            <person name="Wang Q."/>
            <person name="Williams G.A."/>
            <person name="Wong G.K.-S."/>
            <person name="Yao Z."/>
            <person name="Zhang J."/>
            <person name="Zhang X."/>
            <person name="Zhao G."/>
            <person name="Zhou J."/>
            <person name="Zhou Y."/>
            <person name="Nelson D."/>
            <person name="Lehrach H."/>
            <person name="Reinhardt R."/>
            <person name="Naylor S.L."/>
            <person name="Yang H."/>
            <person name="Olson M."/>
            <person name="Weinstock G."/>
            <person name="Gibbs R.A."/>
        </authorList>
    </citation>
    <scope>NUCLEOTIDE SEQUENCE [LARGE SCALE GENOMIC DNA]</scope>
</reference>
<reference key="4">
    <citation type="journal article" date="2004" name="Genome Res.">
        <title>The status, quality, and expansion of the NIH full-length cDNA project: the Mammalian Gene Collection (MGC).</title>
        <authorList>
            <consortium name="The MGC Project Team"/>
        </authorList>
    </citation>
    <scope>NUCLEOTIDE SEQUENCE [LARGE SCALE MRNA] (ISOFORM 2)</scope>
    <source>
        <tissue>Placenta</tissue>
    </source>
</reference>
<reference key="5">
    <citation type="journal article" date="2007" name="BMC Genomics">
        <title>The full-ORF clone resource of the German cDNA consortium.</title>
        <authorList>
            <person name="Bechtel S."/>
            <person name="Rosenfelder H."/>
            <person name="Duda A."/>
            <person name="Schmidt C.P."/>
            <person name="Ernst U."/>
            <person name="Wellenreuther R."/>
            <person name="Mehrle A."/>
            <person name="Schuster C."/>
            <person name="Bahr A."/>
            <person name="Bloecker H."/>
            <person name="Heubner D."/>
            <person name="Hoerlein A."/>
            <person name="Michel G."/>
            <person name="Wedler H."/>
            <person name="Koehrer K."/>
            <person name="Ottenwaelder B."/>
            <person name="Poustka A."/>
            <person name="Wiemann S."/>
            <person name="Schupp I."/>
        </authorList>
    </citation>
    <scope>NUCLEOTIDE SEQUENCE [LARGE SCALE MRNA] OF 179-703 (ISOFORM 1)</scope>
    <source>
        <tissue>Testis</tissue>
    </source>
</reference>
<reference key="6">
    <citation type="journal article" date="2001" name="J. Biol. Chem.">
        <title>The human homolog of Saccharomyces cerevisiae Apg7p is a Protein-activating enzyme for multiple substrates including human Apg12p, GATE-16, GABARAP, and MAP-LC3.</title>
        <authorList>
            <person name="Tanida I."/>
            <person name="Tanida-Miyake E."/>
            <person name="Ueno T."/>
            <person name="Kominami E."/>
        </authorList>
    </citation>
    <scope>FUNCTION</scope>
    <scope>SUBUNIT</scope>
    <scope>INTERACTION WITH ATG12; GABARAP; GABARAPL2 AND MAP1LC3A</scope>
</reference>
<reference key="7">
    <citation type="journal article" date="2002" name="Biochem. Biophys. Res. Commun.">
        <title>Murine Apg12p has a substrate preference for murine Apg7p over three Apg8p homologs.</title>
        <authorList>
            <person name="Tanida I."/>
            <person name="Tanida-Miyake E."/>
            <person name="Nishitani T."/>
            <person name="Komatsu M."/>
            <person name="Yamazaki H."/>
            <person name="Ueno T."/>
            <person name="Kominami E."/>
        </authorList>
    </citation>
    <scope>TISSUE SPECIFICITY</scope>
</reference>
<reference key="8">
    <citation type="journal article" date="2002" name="J. Biol. Chem.">
        <title>Human Apg3p/Aut1p homologue is an authentic E2 enzyme for multiple substrates, GATE-16, GABARAP, and MAP-LC3, and facilitates the conjugation of hApg12p to hApg5p.</title>
        <authorList>
            <person name="Tanida I."/>
            <person name="Tanida-Miyake E."/>
            <person name="Komatsu M."/>
            <person name="Ueno T."/>
            <person name="Kominami E."/>
        </authorList>
    </citation>
    <scope>INTERACTION WITH ATG3 AND ATG12</scope>
    <source>
        <tissue>Brain</tissue>
    </source>
</reference>
<reference key="9">
    <citation type="journal article" date="2006" name="J. Biol. Chem.">
        <title>Phosphatidylserine in addition to phosphatidylethanolamine is an in vitro target of the mammalian Atg8 modifiers, LC3, GABARAP, and GATE-16.</title>
        <authorList>
            <person name="Sou Y.S."/>
            <person name="Tanida I."/>
            <person name="Komatsu M."/>
            <person name="Ueno T."/>
            <person name="Kominami E."/>
        </authorList>
    </citation>
    <scope>FUNCTION</scope>
    <scope>INTERACTION WITH GABARAP; GABARAPL2 AND MAP1LC3A</scope>
</reference>
<reference key="10">
    <citation type="journal article" date="2009" name="Anal. Chem.">
        <title>Lys-N and trypsin cover complementary parts of the phosphoproteome in a refined SCX-based approach.</title>
        <authorList>
            <person name="Gauci S."/>
            <person name="Helbig A.O."/>
            <person name="Slijper M."/>
            <person name="Krijgsveld J."/>
            <person name="Heck A.J."/>
            <person name="Mohammed S."/>
        </authorList>
    </citation>
    <scope>ACETYLATION [LARGE SCALE ANALYSIS] AT ALA-2</scope>
    <scope>CLEAVAGE OF INITIATOR METHIONINE [LARGE SCALE ANALYSIS]</scope>
    <scope>IDENTIFICATION BY MASS SPECTROMETRY [LARGE SCALE ANALYSIS]</scope>
</reference>
<reference key="11">
    <citation type="journal article" date="2009" name="J. Biol. Chem.">
        <title>Regulation of autophagy by the p300 acetyltransferase.</title>
        <authorList>
            <person name="Lee I.H."/>
            <person name="Finkel T."/>
        </authorList>
    </citation>
    <scope>ACETYLATION</scope>
    <scope>INTERACTION WITH EP300</scope>
</reference>
<reference key="12">
    <citation type="journal article" date="2009" name="Sci. Signal.">
        <title>Quantitative phosphoproteomic analysis of T cell receptor signaling reveals system-wide modulation of protein-protein interactions.</title>
        <authorList>
            <person name="Mayya V."/>
            <person name="Lundgren D.H."/>
            <person name="Hwang S.-I."/>
            <person name="Rezaul K."/>
            <person name="Wu L."/>
            <person name="Eng J.K."/>
            <person name="Rodionov V."/>
            <person name="Han D.K."/>
        </authorList>
    </citation>
    <scope>IDENTIFICATION BY MASS SPECTROMETRY [LARGE SCALE ANALYSIS]</scope>
    <source>
        <tissue>Leukemic T-cell</tissue>
    </source>
</reference>
<reference key="13">
    <citation type="journal article" date="2010" name="Nat. Cell Biol.">
        <title>Cytosolic FoxO1 is essential for the induction of autophagy and tumour suppressor activity.</title>
        <authorList>
            <person name="Zhao Y."/>
            <person name="Yang J."/>
            <person name="Liao W."/>
            <person name="Liu X."/>
            <person name="Zhang H."/>
            <person name="Wang S."/>
            <person name="Wang D."/>
            <person name="Feng J."/>
            <person name="Yu L."/>
            <person name="Zhu W.G."/>
        </authorList>
    </citation>
    <scope>INTERACTION WITH FOXO1</scope>
</reference>
<reference key="14">
    <citation type="journal article" date="2010" name="Sci. Signal.">
        <title>Quantitative phosphoproteomics reveals widespread full phosphorylation site occupancy during mitosis.</title>
        <authorList>
            <person name="Olsen J.V."/>
            <person name="Vermeulen M."/>
            <person name="Santamaria A."/>
            <person name="Kumar C."/>
            <person name="Miller M.L."/>
            <person name="Jensen L.J."/>
            <person name="Gnad F."/>
            <person name="Cox J."/>
            <person name="Jensen T.S."/>
            <person name="Nigg E.A."/>
            <person name="Brunak S."/>
            <person name="Mann M."/>
        </authorList>
    </citation>
    <scope>IDENTIFICATION BY MASS SPECTROMETRY [LARGE SCALE ANALYSIS]</scope>
    <source>
        <tissue>Cervix carcinoma</tissue>
    </source>
</reference>
<reference key="15">
    <citation type="journal article" date="2011" name="BMC Syst. Biol.">
        <title>Initial characterization of the human central proteome.</title>
        <authorList>
            <person name="Burkard T.R."/>
            <person name="Planyavsky M."/>
            <person name="Kaupe I."/>
            <person name="Breitwieser F.P."/>
            <person name="Buerckstuemmer T."/>
            <person name="Bennett K.L."/>
            <person name="Superti-Furga G."/>
            <person name="Colinge J."/>
        </authorList>
    </citation>
    <scope>IDENTIFICATION BY MASS SPECTROMETRY [LARGE SCALE ANALYSIS]</scope>
</reference>
<reference key="16">
    <citation type="journal article" date="2012" name="Autophagy">
        <title>The FAP motif within human ATG7, an autophagy-related E1-like enzyme, is essential for the E2-substrate reaction of LC3 lipidation.</title>
        <authorList>
            <person name="Tanida I."/>
            <person name="Yamasaki M."/>
            <person name="Komatsu M."/>
            <person name="Ueno T."/>
        </authorList>
    </citation>
    <scope>FUNCTION</scope>
    <scope>MUTAGENESIS OF PHE-15; ALA-16 AND PRO-17</scope>
</reference>
<reference key="17">
    <citation type="journal article" date="2012" name="Mol. Cell. Proteomics">
        <title>Comparative large-scale characterisation of plant vs. mammal proteins reveals similar and idiosyncratic N-alpha acetylation features.</title>
        <authorList>
            <person name="Bienvenut W.V."/>
            <person name="Sumpton D."/>
            <person name="Martinez A."/>
            <person name="Lilla S."/>
            <person name="Espagne C."/>
            <person name="Meinnel T."/>
            <person name="Giglione C."/>
        </authorList>
    </citation>
    <scope>ACETYLATION [LARGE SCALE ANALYSIS] AT ALA-2</scope>
    <scope>CLEAVAGE OF INITIATOR METHIONINE [LARGE SCALE ANALYSIS]</scope>
    <scope>IDENTIFICATION BY MASS SPECTROMETRY [LARGE SCALE ANALYSIS]</scope>
</reference>
<reference key="18">
    <citation type="journal article" date="2013" name="J. Biol. Chem.">
        <title>Heat shock factor 1 (HSF1) controls chemoresistance and autophagy through transcriptional regulation of autophagy-related protein 7 (ATG7).</title>
        <authorList>
            <person name="Desai S."/>
            <person name="Liu Z."/>
            <person name="Yao J."/>
            <person name="Patel N."/>
            <person name="Chen J."/>
            <person name="Wu Y."/>
            <person name="Ahn E.E."/>
            <person name="Fodstad O."/>
            <person name="Tan M."/>
        </authorList>
    </citation>
    <scope>INDUCTION</scope>
</reference>
<reference key="19">
    <citation type="journal article" date="2014" name="J. Proteomics">
        <title>An enzyme assisted RP-RPLC approach for in-depth analysis of human liver phosphoproteome.</title>
        <authorList>
            <person name="Bian Y."/>
            <person name="Song C."/>
            <person name="Cheng K."/>
            <person name="Dong M."/>
            <person name="Wang F."/>
            <person name="Huang J."/>
            <person name="Sun D."/>
            <person name="Wang L."/>
            <person name="Ye M."/>
            <person name="Zou H."/>
        </authorList>
    </citation>
    <scope>PHOSPHORYLATION [LARGE SCALE ANALYSIS] AT SER-698</scope>
    <scope>IDENTIFICATION BY MASS SPECTROMETRY [LARGE SCALE ANALYSIS]</scope>
    <source>
        <tissue>Liver</tissue>
    </source>
</reference>
<reference key="20">
    <citation type="journal article" date="2015" name="Biochem. Biophys. Res. Commun.">
        <title>Identification and characterization of the linear region of ATG3 that interacts with ATG7 in higher eukaryotes.</title>
        <authorList>
            <person name="Ohashi K."/>
            <person name="Otomo T."/>
        </authorList>
    </citation>
    <scope>INTERACTION WITH ATG3</scope>
    <scope>MUTAGENESIS OF TRP-243 AND ARG-246</scope>
</reference>
<reference key="21">
    <citation type="journal article" date="2023" name="Cell Rep.">
        <title>ATM-CHK2-TRIM32 axis regulates ATG7 ubiquitination to initiate autophagy under oxidative stress.</title>
        <authorList>
            <person name="Liu J."/>
            <person name="Lu S."/>
            <person name="Zheng L."/>
            <person name="Guo Q."/>
            <person name="Cao L."/>
            <person name="Xiao Y."/>
            <person name="Chen D."/>
            <person name="Zou Y."/>
            <person name="Liu X."/>
            <person name="Deng C."/>
            <person name="Zhang S."/>
            <person name="Yang R."/>
            <person name="Wang Y."/>
            <person name="Zhang Y."/>
            <person name="Zhang N."/>
            <person name="Song X."/>
            <person name="Xing C."/>
            <person name="Wang Z."/>
            <person name="Cao L."/>
        </authorList>
    </citation>
    <scope>UBIQUITINATION AT LYS-45</scope>
    <scope>MUTAGENESIS OF LYS-45</scope>
</reference>
<reference key="22">
    <citation type="journal article" date="2021" name="N. Engl. J. Med.">
        <title>Developmental Consequences of Defective ATG7-Mediated Autophagy in Humans.</title>
        <authorList>
            <person name="Collier J.J."/>
            <person name="Guissart C."/>
            <person name="Olahova M."/>
            <person name="Sasorith S."/>
            <person name="Piron-Prunier F."/>
            <person name="Suomi F."/>
            <person name="Zhang D."/>
            <person name="Martinez-Lopez N."/>
            <person name="Leboucq N."/>
            <person name="Bahr A."/>
            <person name="Azzarello-Burri S."/>
            <person name="Reich S."/>
            <person name="Schoels L."/>
            <person name="Polvikoski T.M."/>
            <person name="Meyer P."/>
            <person name="Larrieu L."/>
            <person name="Schaefer A.M."/>
            <person name="Alsaif H.S."/>
            <person name="Alyamani S."/>
            <person name="Zuchner S."/>
            <person name="Barbosa I.A."/>
            <person name="Deshpande C."/>
            <person name="Pyle A."/>
            <person name="Rauch A."/>
            <person name="Synofzik M."/>
            <person name="Alkuraya F.S."/>
            <person name="Rivier F."/>
            <person name="Ryten M."/>
            <person name="McFarland R."/>
            <person name="Delahodde A."/>
            <person name="McWilliams T.G."/>
            <person name="Koenig M."/>
            <person name="Taylor R.W."/>
        </authorList>
    </citation>
    <scope>VARIANTS SCAR31 THR-234; ARG-261; ASP-511; PRO-512; HIS-576; MET-588; TYR-624 AND 659-ARG--ILE-703 DEL</scope>
    <scope>INVOLVEMENT IN SCAR31</scope>
    <scope>CHARACTERIZATION OF VARIANTS SCAR31 THR-234; ASP-511; HIS-576; MET-588 AND TYR-624</scope>
    <scope>MUTAGENESIS OF CYS-572</scope>
    <scope>FUNCTION</scope>
</reference>
<sequence length="703" mass="77960">MAAATGDPGLSKLQFAPFSSALDVGFWHELTQKKLNEYRLDEAPKDIKGYYYNGDSAGLPARLTLEFSAFDMSAPTPARCCPAIGTLYNTNTLESFKTADKKLLLEQAANEIWESIKSGTALENPVLLNKFLLLTFADLKKYHFYYWFCYPALCLPESLPLIQGPVGLDQRFSLKQIEALECAYDNLCQTEGVTALPYFLIKYDENMVLVSLLKHYSDFFQGQRTKITIGVYDPCNLAQYPGWPLRNFLVLAAHRWSSSFQSVEVVCFRDRTMQGARDVAHSIIFEVKLPEMAFSPDCPKAVGWEKNQKGGMGPRMVNLSECMDPKRLAESSVDLNLKLMCWRLVPTLDLDKVVSVKCLLLGAGTLGCNVARTLMGWGVRHITFVDNAKISYSNPVRQPLYEFEDCLGGGKPKALAAADRLQKIFPGVNARGFNMSIPMPGHPVNFSSVTLEQARRDVEQLEQLIESHDVVFLLMDTRESRWLPAVIAASKRKLVINAALGFDTFVVMRHGLKKPKQQGAGDLCPNHPVASADLLGSSLFANIPGYKLGCYFCNDVVAPGDSTRDRTLDQQCTVSRPGLAVIAGALAVELMVSVLQHPEGGYAIASSSDDRMNEPPTSLGLVPHQIRGFLSRFDNVLPVSLAFDKCTACSSKVLDQYEREGFNFLAKVFNSSHSFLEDLTGLTLLHQETQAAEIWDMSDDETI</sequence>
<keyword id="KW-0007">Acetylation</keyword>
<keyword id="KW-0025">Alternative splicing</keyword>
<keyword id="KW-0072">Autophagy</keyword>
<keyword id="KW-0090">Biological rhythms</keyword>
<keyword id="KW-0963">Cytoplasm</keyword>
<keyword id="KW-0225">Disease variant</keyword>
<keyword id="KW-1017">Isopeptide bond</keyword>
<keyword id="KW-0523">Neurodegeneration</keyword>
<keyword id="KW-0597">Phosphoprotein</keyword>
<keyword id="KW-0653">Protein transport</keyword>
<keyword id="KW-1267">Proteomics identification</keyword>
<keyword id="KW-1185">Reference proteome</keyword>
<keyword id="KW-0813">Transport</keyword>
<keyword id="KW-0832">Ubl conjugation</keyword>
<keyword id="KW-0833">Ubl conjugation pathway</keyword>
<accession>O95352</accession>
<accession>B4E170</accession>
<accession>E9PB95</accession>
<accession>Q7L8L0</accession>
<accession>Q9BWP2</accession>
<accession>Q9UFH4</accession>
<proteinExistence type="evidence at protein level"/>
<protein>
    <recommendedName>
        <fullName evidence="16">Ubiquitin-like modifier-activating enzyme ATG7</fullName>
    </recommendedName>
    <alternativeName>
        <fullName>ATG12-activating enzyme E1 ATG7</fullName>
    </alternativeName>
    <alternativeName>
        <fullName>Autophagy-related protein 7</fullName>
        <shortName>APG7-like</shortName>
        <shortName>hAGP7</shortName>
    </alternativeName>
    <alternativeName>
        <fullName>Ubiquitin-activating enzyme E1-like protein</fullName>
    </alternativeName>
</protein>
<comment type="function">
    <text evidence="2 3 6 9 12">E1-like activating enzyme involved in the 2 ubiquitin-like systems required for cytoplasm to vacuole transport (Cvt) and autophagy. Activates ATG12 for its conjugation with ATG5 as well as the ATG8 family proteins for their conjugation with phosphatidylethanolamine. Both systems are needed for the ATG8 association to Cvt vesicles and autophagosomes membranes. Required for autophagic death induced by caspase-8 inhibition. Facilitates LC3-I lipidation with phosphatidylethanolamine to form LC3-II which is found on autophagosomal membranes (PubMed:34161705). Required for mitophagy which contributes to regulate mitochondrial quantity and quality by eliminating the mitochondria to a basal level to fulfill cellular energy requirements and preventing excess ROS production. Modulates p53/TP53 activity to regulate cell cycle and survival during metabolic stress. Also plays a key role in the maintenance of axonal homeostasis, the prevention of axonal degeneration, the maintenance of hematopoietic stem cells, the formation of Paneth cell granules, as well as in adipose differentiation. Plays a role in regulating the liver clock and glucose metabolism by mediating the autophagic degradation of CRY1 (clock repressor) in a time-dependent manner (By similarity).</text>
</comment>
<comment type="subunit">
    <text evidence="2 3 4 6 7 8 11">Homodimer (PubMed:11096062). Interacts with ATG3; this interaction is essential for the transfer of ATG8-like proteins's thioester from ATG7 to ATG3 and plays a role in the conjugation of ATG12 to ATG5 (PubMed:11825910, PubMed:26043688). Interacts with ATG12 (PubMed:11096062, PubMed:11825910). Forms intermediate conjugates with GABARAPL1 (By similarity). Forms intermediate conjugates with ATG8-like proteins such as GABARAP, GABARAPL2 or MAP1LC3A (PubMed:11096062, PubMed:16303767). Interacts with EP300 acetyltransferase (PubMed:19124466). Interacts with FOXO1 (PubMed:20543840).</text>
</comment>
<comment type="interaction">
    <interactant intactId="EBI-987834">
        <id>O95352</id>
    </interactant>
    <interactant intactId="EBI-358607">
        <id>P29692</id>
        <label>EEF1D</label>
    </interactant>
    <organismsDiffer>false</organismsDiffer>
    <experiments>2</experiments>
</comment>
<comment type="interaction">
    <interactant intactId="EBI-987834">
        <id>O95352</id>
    </interactant>
    <interactant intactId="EBI-712001">
        <id>O95166</id>
        <label>GABARAP</label>
    </interactant>
    <organismsDiffer>false</organismsDiffer>
    <experiments>8</experiments>
</comment>
<comment type="interaction">
    <interactant intactId="EBI-987834">
        <id>O95352</id>
    </interactant>
    <interactant intactId="EBI-746969">
        <id>Q9H0R8</id>
        <label>GABARAPL1</label>
    </interactant>
    <organismsDiffer>false</organismsDiffer>
    <experiments>6</experiments>
</comment>
<comment type="interaction">
    <interactant intactId="EBI-987834">
        <id>O95352</id>
    </interactant>
    <interactant intactId="EBI-720116">
        <id>P60520</id>
        <label>GABARAPL2</label>
    </interactant>
    <organismsDiffer>false</organismsDiffer>
    <experiments>8</experiments>
</comment>
<comment type="interaction">
    <interactant intactId="EBI-987834">
        <id>O95352</id>
    </interactant>
    <interactant intactId="EBI-2866589">
        <id>P14316</id>
        <label>IRF2</label>
    </interactant>
    <organismsDiffer>false</organismsDiffer>
    <experiments>2</experiments>
</comment>
<comment type="interaction">
    <interactant intactId="EBI-987834">
        <id>O95352</id>
    </interactant>
    <interactant intactId="EBI-373144">
        <id>Q9GZQ8</id>
        <label>MAP1LC3B</label>
    </interactant>
    <organismsDiffer>false</organismsDiffer>
    <experiments>7</experiments>
</comment>
<comment type="interaction">
    <interactant intactId="EBI-987834">
        <id>O95352</id>
    </interactant>
    <interactant intactId="EBI-17677006">
        <id>Q9UIY3</id>
        <label>RWDD2A</label>
    </interactant>
    <organismsDiffer>false</organismsDiffer>
    <experiments>3</experiments>
</comment>
<comment type="interaction">
    <interactant intactId="EBI-987834">
        <id>O95352</id>
    </interactant>
    <interactant intactId="EBI-1802965">
        <id>Q96EB6</id>
        <label>SIRT1</label>
    </interactant>
    <organismsDiffer>false</organismsDiffer>
    <experiments>3</experiments>
</comment>
<comment type="interaction">
    <interactant intactId="EBI-15980880">
        <id>O95352-2</id>
    </interactant>
    <interactant intactId="EBI-372899">
        <id>Q13148</id>
        <label>TARDBP</label>
    </interactant>
    <organismsDiffer>false</organismsDiffer>
    <experiments>3</experiments>
</comment>
<comment type="interaction">
    <interactant intactId="EBI-15980880">
        <id>O95352-2</id>
    </interactant>
    <interactant intactId="EBI-366083">
        <id>P04637</id>
        <label>TP53</label>
    </interactant>
    <organismsDiffer>false</organismsDiffer>
    <experiments>4</experiments>
</comment>
<comment type="subcellular location">
    <subcellularLocation>
        <location evidence="1">Cytoplasm</location>
    </subcellularLocation>
    <subcellularLocation>
        <location evidence="1">Preautophagosomal structure</location>
    </subcellularLocation>
    <text evidence="1">Also localizes to discrete punctae along the ciliary axoneme and to the base of the ciliary axoneme.</text>
</comment>
<comment type="alternative products">
    <event type="alternative splicing"/>
    <isoform>
        <id>O95352-1</id>
        <name>1</name>
        <sequence type="displayed"/>
    </isoform>
    <isoform>
        <id>O95352-2</id>
        <name>2</name>
        <sequence type="described" ref="VSP_013205"/>
    </isoform>
    <isoform>
        <id>O95352-3</id>
        <name>3</name>
        <sequence type="described" ref="VSP_045206 VSP_045207"/>
    </isoform>
</comment>
<comment type="tissue specificity">
    <text evidence="5">Widely expressed, especially in kidney, liver, lymph nodes and bone marrow.</text>
</comment>
<comment type="induction">
    <text evidence="10">Expression is up-regulated by the transcription factor HSF1.</text>
</comment>
<comment type="domain">
    <text evidence="1">The C-terminal part of the protein is essential for the dimerization and interaction with ATG3 and ATG12.</text>
</comment>
<comment type="domain">
    <text evidence="9">The N-terminal FAP motif (residues 15 to 17) is essential for the formation of the ATG89-PE and ATG5-ATG12 conjugates.</text>
</comment>
<comment type="PTM">
    <text evidence="7">Acetylated by EP300.</text>
</comment>
<comment type="PTM">
    <text evidence="13">Polyubiquitinated on Lys-45 via 'Lys-63'-linked ubiquitin by TRIM32; this modification positiely regulates ATG8 and ATG12 activating enzyme activity leading to initiation of autophagy under metabolic stress.</text>
</comment>
<comment type="disease" evidence="12">
    <disease id="DI-06159">
        <name>Spinocerebellar ataxia, autosomal recessive, 31</name>
        <acronym>SCAR31</acronym>
        <description>A form of spinocerebellar ataxia, a clinically and genetically heterogeneous group of cerebellar disorders due to degeneration of the cerebellum with variable involvement of the brainstem and spinal cord. SCAR30 is characterized by global developmental delay, hypotonia, variably impaired intellectual and language development, ataxic gait, tremor, and dysarthria. Most affected individuals have optic atrophy. Additional features may include retinitis pigmentosa, sensorineural deafness, dysmorphic facial features, and possibly endocrine dysfunction.</description>
        <dbReference type="MIM" id="619422"/>
    </disease>
    <text>The disease is caused by variants affecting the gene represented in this entry.</text>
</comment>
<comment type="similarity">
    <text evidence="16">Belongs to the ATG7 family.</text>
</comment>
<feature type="initiator methionine" description="Removed" evidence="18 19">
    <location>
        <position position="1"/>
    </location>
</feature>
<feature type="chain" id="PRO_0000212806" description="Ubiquitin-like modifier-activating enzyme ATG7">
    <location>
        <begin position="2"/>
        <end position="703"/>
    </location>
</feature>
<feature type="short sequence motif" description="FAP motif">
    <location>
        <begin position="15"/>
        <end position="17"/>
    </location>
</feature>
<feature type="active site" description="Glycyl thioester intermediate" evidence="1">
    <location>
        <position position="572"/>
    </location>
</feature>
<feature type="modified residue" description="N-acetylalanine" evidence="18 19">
    <location>
        <position position="2"/>
    </location>
</feature>
<feature type="modified residue" description="Phosphoserine" evidence="20">
    <location>
        <position position="698"/>
    </location>
</feature>
<feature type="cross-link" description="Glycyl lysine isopeptide (Lys-Gly) (interchain with G-Cter in ubiquitin)" evidence="13">
    <location>
        <position position="45"/>
    </location>
</feature>
<feature type="splice variant" id="VSP_045206" description="In isoform 3." evidence="14">
    <location>
        <begin position="138"/>
        <end position="176"/>
    </location>
</feature>
<feature type="splice variant" id="VSP_013205" description="In isoform 2." evidence="15">
    <location>
        <begin position="626"/>
        <end position="652"/>
    </location>
</feature>
<feature type="splice variant" id="VSP_045207" description="In isoform 3." evidence="14">
    <location>
        <begin position="653"/>
        <end position="693"/>
    </location>
</feature>
<feature type="sequence variant" id="VAR_085979" description="In SCAR31; results in decreased LC3-I lipidation to form LC3-II." evidence="12">
    <original>P</original>
    <variation>T</variation>
    <location>
        <position position="234"/>
    </location>
</feature>
<feature type="sequence variant" id="VAR_085980" description="In SCAR31; uncertain significance." evidence="12">
    <original>Q</original>
    <variation>R</variation>
    <location>
        <position position="261"/>
    </location>
</feature>
<feature type="sequence variant" id="VAR_053014" description="In dbSNP:rs36117895.">
    <original>V</original>
    <variation>A</variation>
    <location>
        <position position="471"/>
    </location>
</feature>
<feature type="sequence variant" id="VAR_085981" description="In SCAR31; results in severely decreased LC3-I lipidation to form LC3-II." evidence="12">
    <original>G</original>
    <variation>D</variation>
    <location>
        <position position="511"/>
    </location>
</feature>
<feature type="sequence variant" id="VAR_085982" description="In SCAR31; in homozygous patient cells it results in diminished autophagic flux." evidence="12">
    <original>L</original>
    <variation>P</variation>
    <location>
        <position position="512"/>
    </location>
</feature>
<feature type="sequence variant" id="VAR_085983" description="In SCAR31; results in decreased LC3-I lipidation to form LC3-II." evidence="12">
    <original>R</original>
    <variation>H</variation>
    <location>
        <position position="576"/>
    </location>
</feature>
<feature type="sequence variant" id="VAR_085984" description="In SCAR31; results in severely decreased LC3-I lipidation to form LC3-II." evidence="12">
    <original>V</original>
    <variation>M</variation>
    <location>
        <position position="588"/>
    </location>
</feature>
<feature type="sequence variant" id="VAR_085985" description="In SCAR31; results in decreased LC3-I lipidation to form LC3-II." evidence="12">
    <original>H</original>
    <variation>Y</variation>
    <location>
        <position position="624"/>
    </location>
</feature>
<feature type="sequence variant" id="VAR_085986" description="In SCAR31." evidence="12">
    <location>
        <begin position="659"/>
        <end position="703"/>
    </location>
</feature>
<feature type="mutagenesis site" description="Impairs conjugation activity; when associated with D-16 and D-17." evidence="9">
    <original>F</original>
    <variation>D</variation>
    <location>
        <position position="15"/>
    </location>
</feature>
<feature type="mutagenesis site" description="Impairs conjugation activity; when associated with D-15 and D-17." evidence="9">
    <original>A</original>
    <variation>D</variation>
    <location>
        <position position="16"/>
    </location>
</feature>
<feature type="mutagenesis site" description="Impairs conjugation activity; when associated with D-15 and D-16." evidence="9">
    <original>P</original>
    <variation>D</variation>
    <location>
        <position position="17"/>
    </location>
</feature>
<feature type="mutagenesis site" description="Impairs interaction with ATG12. Impairs inrteraction with MAP1LC3B." evidence="13">
    <original>K</original>
    <variation>R</variation>
    <location>
        <position position="45"/>
    </location>
</feature>
<feature type="mutagenesis site" description="Moderately impairs ATG3 binding. Moderately reduces GABARAP-ATG3 thioester bond formation. Moderately reduces GABARAP lipidation." evidence="11">
    <original>W</original>
    <variation>A</variation>
    <location>
        <position position="243"/>
    </location>
</feature>
<feature type="mutagenesis site" description="Almost completely impairs ATG3 binding. Severely reduces GABARAP-ATG3 thioester bond formation. Severely reduces GABARAP lipidation." evidence="11">
    <original>R</original>
    <variation>D</variation>
    <location>
        <position position="246"/>
    </location>
</feature>
<feature type="mutagenesis site" description="Loss of LC3-I lipidation to form LC3-II." evidence="12">
    <original>C</original>
    <variation>A</variation>
    <location>
        <position position="572"/>
    </location>
</feature>
<feature type="sequence conflict" description="In Ref. 2; BAG64682." evidence="16" ref="2">
    <original>V</original>
    <variation>A</variation>
    <location>
        <position position="210"/>
    </location>
</feature>
<feature type="sequence conflict" description="In Ref. 2; BAG64682." evidence="16" ref="2">
    <original>P</original>
    <variation>L</variation>
    <location>
        <position position="346"/>
    </location>
</feature>
<name>ATG7_HUMAN</name>
<evidence type="ECO:0000250" key="1"/>
<evidence type="ECO:0000250" key="2">
    <source>
        <dbReference type="UniProtKB" id="Q9D906"/>
    </source>
</evidence>
<evidence type="ECO:0000269" key="3">
    <source>
    </source>
</evidence>
<evidence type="ECO:0000269" key="4">
    <source>
    </source>
</evidence>
<evidence type="ECO:0000269" key="5">
    <source>
    </source>
</evidence>
<evidence type="ECO:0000269" key="6">
    <source>
    </source>
</evidence>
<evidence type="ECO:0000269" key="7">
    <source>
    </source>
</evidence>
<evidence type="ECO:0000269" key="8">
    <source>
    </source>
</evidence>
<evidence type="ECO:0000269" key="9">
    <source>
    </source>
</evidence>
<evidence type="ECO:0000269" key="10">
    <source>
    </source>
</evidence>
<evidence type="ECO:0000269" key="11">
    <source>
    </source>
</evidence>
<evidence type="ECO:0000269" key="12">
    <source>
    </source>
</evidence>
<evidence type="ECO:0000269" key="13">
    <source>
    </source>
</evidence>
<evidence type="ECO:0000303" key="14">
    <source>
    </source>
</evidence>
<evidence type="ECO:0000303" key="15">
    <source>
    </source>
</evidence>
<evidence type="ECO:0000305" key="16"/>
<evidence type="ECO:0000312" key="17">
    <source>
        <dbReference type="HGNC" id="HGNC:16935"/>
    </source>
</evidence>
<evidence type="ECO:0007744" key="18">
    <source>
    </source>
</evidence>
<evidence type="ECO:0007744" key="19">
    <source>
    </source>
</evidence>
<evidence type="ECO:0007744" key="20">
    <source>
    </source>
</evidence>